<name>YVD2_VACCC</name>
<dbReference type="EMBL" id="M35027">
    <property type="status" value="NOT_ANNOTATED_CDS"/>
    <property type="molecule type" value="Genomic_DNA"/>
</dbReference>
<dbReference type="SMR" id="P68491"/>
<dbReference type="Proteomes" id="UP000008269">
    <property type="component" value="Segment"/>
</dbReference>
<feature type="chain" id="PRO_0000099702" description="Uncharacterized 8.6 kDa protein">
    <location>
        <begin position="1"/>
        <end position="72"/>
    </location>
</feature>
<organismHost>
    <name type="scientific">Homo sapiens</name>
    <name type="common">Human</name>
    <dbReference type="NCBI Taxonomy" id="9606"/>
</organismHost>
<protein>
    <recommendedName>
        <fullName>Uncharacterized 8.6 kDa protein</fullName>
    </recommendedName>
</protein>
<sequence>MRSLPDIFYNFIHLQLYSLFSLLLVIISHNLGNTYPLIVRYLIQVITYNYQLFLYIIDWMVDIHGGINYSNR</sequence>
<organism>
    <name type="scientific">Vaccinia virus (strain Copenhagen)</name>
    <name type="common">VACV</name>
    <dbReference type="NCBI Taxonomy" id="10249"/>
    <lineage>
        <taxon>Viruses</taxon>
        <taxon>Varidnaviria</taxon>
        <taxon>Bamfordvirae</taxon>
        <taxon>Nucleocytoviricota</taxon>
        <taxon>Pokkesviricetes</taxon>
        <taxon>Chitovirales</taxon>
        <taxon>Poxviridae</taxon>
        <taxon>Chordopoxvirinae</taxon>
        <taxon>Orthopoxvirus</taxon>
        <taxon>Vaccinia virus</taxon>
    </lineage>
</organism>
<reference key="1">
    <citation type="journal article" date="1990" name="Virology">
        <title>The complete DNA sequence of vaccinia virus.</title>
        <authorList>
            <person name="Goebel S.J."/>
            <person name="Johnson G.P."/>
            <person name="Perkus M.E."/>
            <person name="Davis S.W."/>
            <person name="Winslow J.P."/>
            <person name="Paoletti E."/>
        </authorList>
    </citation>
    <scope>NUCLEOTIDE SEQUENCE [LARGE SCALE GENOMIC DNA]</scope>
</reference>
<reference key="2">
    <citation type="journal article" date="1990" name="Virology">
        <title>Appendix to 'The complete DNA sequence of vaccinia virus'.</title>
        <authorList>
            <person name="Goebel S.J."/>
            <person name="Johnson G.P."/>
            <person name="Perkus M.E."/>
            <person name="Davis S.W."/>
            <person name="Winslow J.P."/>
            <person name="Paoletti E."/>
        </authorList>
    </citation>
    <scope>COMPLETE GENOME</scope>
</reference>
<accession>P68491</accession>
<accession>P04320</accession>
<keyword id="KW-1185">Reference proteome</keyword>
<proteinExistence type="predicted"/>